<geneLocation type="mitochondrion"/>
<gene>
    <name type="primary">MT-CYB</name>
    <name type="synonym">COB</name>
    <name type="synonym">CYTB</name>
    <name type="synonym">MTCYB</name>
</gene>
<protein>
    <recommendedName>
        <fullName>Cytochrome b</fullName>
    </recommendedName>
    <alternativeName>
        <fullName>Complex III subunit 3</fullName>
    </alternativeName>
    <alternativeName>
        <fullName>Complex III subunit III</fullName>
    </alternativeName>
    <alternativeName>
        <fullName>Cytochrome b-c1 complex subunit 3</fullName>
    </alternativeName>
    <alternativeName>
        <fullName>Ubiquinol-cytochrome-c reductase complex cytochrome b subunit</fullName>
    </alternativeName>
</protein>
<reference key="1">
    <citation type="journal article" date="2002" name="Auk">
        <title>What is a wood-warbler? Molecular characterization of a monophyletic Parulidae.</title>
        <authorList>
            <person name="Lovette I.J."/>
            <person name="Bermingham E."/>
        </authorList>
    </citation>
    <scope>NUCLEOTIDE SEQUENCE [GENOMIC DNA]</scope>
    <source>
        <strain>Isolate CDS 4131 / USIVI 4131</strain>
    </source>
</reference>
<name>CYB_ICTVI</name>
<accession>Q8M4C6</accession>
<keyword id="KW-0249">Electron transport</keyword>
<keyword id="KW-0349">Heme</keyword>
<keyword id="KW-0408">Iron</keyword>
<keyword id="KW-0472">Membrane</keyword>
<keyword id="KW-0479">Metal-binding</keyword>
<keyword id="KW-0496">Mitochondrion</keyword>
<keyword id="KW-0999">Mitochondrion inner membrane</keyword>
<keyword id="KW-0679">Respiratory chain</keyword>
<keyword id="KW-0812">Transmembrane</keyword>
<keyword id="KW-1133">Transmembrane helix</keyword>
<keyword id="KW-0813">Transport</keyword>
<keyword id="KW-0830">Ubiquinone</keyword>
<feature type="chain" id="PRO_0000061060" description="Cytochrome b">
    <location>
        <begin position="1"/>
        <end position="380"/>
    </location>
</feature>
<feature type="transmembrane region" description="Helical" evidence="2">
    <location>
        <begin position="34"/>
        <end position="54"/>
    </location>
</feature>
<feature type="transmembrane region" description="Helical" evidence="2">
    <location>
        <begin position="78"/>
        <end position="99"/>
    </location>
</feature>
<feature type="transmembrane region" description="Helical" evidence="2">
    <location>
        <begin position="114"/>
        <end position="134"/>
    </location>
</feature>
<feature type="transmembrane region" description="Helical" evidence="2">
    <location>
        <begin position="179"/>
        <end position="199"/>
    </location>
</feature>
<feature type="transmembrane region" description="Helical" evidence="2">
    <location>
        <begin position="227"/>
        <end position="247"/>
    </location>
</feature>
<feature type="transmembrane region" description="Helical" evidence="2">
    <location>
        <begin position="289"/>
        <end position="309"/>
    </location>
</feature>
<feature type="transmembrane region" description="Helical" evidence="2">
    <location>
        <begin position="321"/>
        <end position="341"/>
    </location>
</feature>
<feature type="transmembrane region" description="Helical" evidence="2">
    <location>
        <begin position="348"/>
        <end position="368"/>
    </location>
</feature>
<feature type="binding site" description="axial binding residue" evidence="2">
    <location>
        <position position="84"/>
    </location>
    <ligand>
        <name>heme b</name>
        <dbReference type="ChEBI" id="CHEBI:60344"/>
        <label>b562</label>
    </ligand>
    <ligandPart>
        <name>Fe</name>
        <dbReference type="ChEBI" id="CHEBI:18248"/>
    </ligandPart>
</feature>
<feature type="binding site" description="axial binding residue" evidence="2">
    <location>
        <position position="98"/>
    </location>
    <ligand>
        <name>heme b</name>
        <dbReference type="ChEBI" id="CHEBI:60344"/>
        <label>b566</label>
    </ligand>
    <ligandPart>
        <name>Fe</name>
        <dbReference type="ChEBI" id="CHEBI:18248"/>
    </ligandPart>
</feature>
<feature type="binding site" description="axial binding residue" evidence="2">
    <location>
        <position position="183"/>
    </location>
    <ligand>
        <name>heme b</name>
        <dbReference type="ChEBI" id="CHEBI:60344"/>
        <label>b562</label>
    </ligand>
    <ligandPart>
        <name>Fe</name>
        <dbReference type="ChEBI" id="CHEBI:18248"/>
    </ligandPart>
</feature>
<feature type="binding site" description="axial binding residue" evidence="2">
    <location>
        <position position="197"/>
    </location>
    <ligand>
        <name>heme b</name>
        <dbReference type="ChEBI" id="CHEBI:60344"/>
        <label>b566</label>
    </ligand>
    <ligandPart>
        <name>Fe</name>
        <dbReference type="ChEBI" id="CHEBI:18248"/>
    </ligandPart>
</feature>
<feature type="binding site" evidence="2">
    <location>
        <position position="202"/>
    </location>
    <ligand>
        <name>a ubiquinone</name>
        <dbReference type="ChEBI" id="CHEBI:16389"/>
    </ligand>
</feature>
<proteinExistence type="inferred from homology"/>
<organism>
    <name type="scientific">Icteria virens</name>
    <name type="common">Yellow-breasted chat</name>
    <dbReference type="NCBI Taxonomy" id="135437"/>
    <lineage>
        <taxon>Eukaryota</taxon>
        <taxon>Metazoa</taxon>
        <taxon>Chordata</taxon>
        <taxon>Craniata</taxon>
        <taxon>Vertebrata</taxon>
        <taxon>Euteleostomi</taxon>
        <taxon>Archelosauria</taxon>
        <taxon>Archosauria</taxon>
        <taxon>Dinosauria</taxon>
        <taxon>Saurischia</taxon>
        <taxon>Theropoda</taxon>
        <taxon>Coelurosauria</taxon>
        <taxon>Aves</taxon>
        <taxon>Neognathae</taxon>
        <taxon>Neoaves</taxon>
        <taxon>Telluraves</taxon>
        <taxon>Australaves</taxon>
        <taxon>Passeriformes</taxon>
        <taxon>Passeroidea</taxon>
        <taxon>Parulidae</taxon>
        <taxon>Icteria</taxon>
    </lineage>
</organism>
<sequence length="380" mass="42565">MALNLRKNHRILKIINDALIDLPTPSNISTWWNFGSLLGVCLITQIITGLLLAMHYTADTNLAFSSVAHICRDVQFGWLIRNLHANGASFFFICIYLHIGRGLYYGSYLYKETWNIGVILLLALMATAFVGYVLPWGQMSFWGATVITNLFSAIPYIGQTLVEWAWGGFSVDNPTLTRFFALHFLLPFVIVGLTLVHLTFLHETGSNNPLGIPSDCDKIPFHPYYTIKDILGFVLMLSLLVSLALFSPNLLGDPENFTPANPLVTPPHIKPEWYFLFAYAILRSIPNKLGGVLALAASILVLFLTPLLHTSKLRSMTFRPLSQILFWTLVANVLILTWVGSQPVEHPFIIIGQLASFTYFTIILVLFPLAALLENKLLKL</sequence>
<comment type="function">
    <text evidence="2">Component of the ubiquinol-cytochrome c reductase complex (complex III or cytochrome b-c1 complex) that is part of the mitochondrial respiratory chain. The b-c1 complex mediates electron transfer from ubiquinol to cytochrome c. Contributes to the generation of a proton gradient across the mitochondrial membrane that is then used for ATP synthesis.</text>
</comment>
<comment type="cofactor">
    <cofactor evidence="2">
        <name>heme b</name>
        <dbReference type="ChEBI" id="CHEBI:60344"/>
    </cofactor>
    <text evidence="2">Binds 2 heme b groups non-covalently.</text>
</comment>
<comment type="subunit">
    <text evidence="2">The cytochrome bc1 complex contains 11 subunits: 3 respiratory subunits (MT-CYB, CYC1 and UQCRFS1), 2 core proteins (UQCRC1 and UQCRC2) and 6 low-molecular weight proteins (UQCRH/QCR6, UQCRB/QCR7, UQCRQ/QCR8, UQCR10/QCR9, UQCR11/QCR10 and a cleavage product of UQCRFS1). This cytochrome bc1 complex then forms a dimer.</text>
</comment>
<comment type="subcellular location">
    <subcellularLocation>
        <location evidence="2">Mitochondrion inner membrane</location>
        <topology evidence="2">Multi-pass membrane protein</topology>
    </subcellularLocation>
</comment>
<comment type="miscellaneous">
    <text evidence="1">Heme 1 (or BL or b562) is low-potential and absorbs at about 562 nm, and heme 2 (or BH or b566) is high-potential and absorbs at about 566 nm.</text>
</comment>
<comment type="similarity">
    <text evidence="3 4">Belongs to the cytochrome b family.</text>
</comment>
<comment type="caution">
    <text evidence="2">The full-length protein contains only eight transmembrane helices, not nine as predicted by bioinformatics tools.</text>
</comment>
<dbReference type="EMBL" id="AF383028">
    <property type="protein sequence ID" value="AAM90449.1"/>
    <property type="molecule type" value="Genomic_DNA"/>
</dbReference>
<dbReference type="SMR" id="Q8M4C6"/>
<dbReference type="GO" id="GO:0005743">
    <property type="term" value="C:mitochondrial inner membrane"/>
    <property type="evidence" value="ECO:0007669"/>
    <property type="project" value="UniProtKB-SubCell"/>
</dbReference>
<dbReference type="GO" id="GO:0045275">
    <property type="term" value="C:respiratory chain complex III"/>
    <property type="evidence" value="ECO:0007669"/>
    <property type="project" value="InterPro"/>
</dbReference>
<dbReference type="GO" id="GO:0046872">
    <property type="term" value="F:metal ion binding"/>
    <property type="evidence" value="ECO:0007669"/>
    <property type="project" value="UniProtKB-KW"/>
</dbReference>
<dbReference type="GO" id="GO:0008121">
    <property type="term" value="F:ubiquinol-cytochrome-c reductase activity"/>
    <property type="evidence" value="ECO:0007669"/>
    <property type="project" value="InterPro"/>
</dbReference>
<dbReference type="GO" id="GO:0006122">
    <property type="term" value="P:mitochondrial electron transport, ubiquinol to cytochrome c"/>
    <property type="evidence" value="ECO:0007669"/>
    <property type="project" value="TreeGrafter"/>
</dbReference>
<dbReference type="CDD" id="cd00290">
    <property type="entry name" value="cytochrome_b_C"/>
    <property type="match status" value="1"/>
</dbReference>
<dbReference type="CDD" id="cd00284">
    <property type="entry name" value="Cytochrome_b_N"/>
    <property type="match status" value="1"/>
</dbReference>
<dbReference type="FunFam" id="1.20.810.10:FF:000002">
    <property type="entry name" value="Cytochrome b"/>
    <property type="match status" value="1"/>
</dbReference>
<dbReference type="Gene3D" id="1.20.810.10">
    <property type="entry name" value="Cytochrome Bc1 Complex, Chain C"/>
    <property type="match status" value="1"/>
</dbReference>
<dbReference type="InterPro" id="IPR005798">
    <property type="entry name" value="Cyt_b/b6_C"/>
</dbReference>
<dbReference type="InterPro" id="IPR036150">
    <property type="entry name" value="Cyt_b/b6_C_sf"/>
</dbReference>
<dbReference type="InterPro" id="IPR005797">
    <property type="entry name" value="Cyt_b/b6_N"/>
</dbReference>
<dbReference type="InterPro" id="IPR027387">
    <property type="entry name" value="Cytb/b6-like_sf"/>
</dbReference>
<dbReference type="InterPro" id="IPR030689">
    <property type="entry name" value="Cytochrome_b"/>
</dbReference>
<dbReference type="InterPro" id="IPR048260">
    <property type="entry name" value="Cytochrome_b_C_euk/bac"/>
</dbReference>
<dbReference type="InterPro" id="IPR048259">
    <property type="entry name" value="Cytochrome_b_N_euk/bac"/>
</dbReference>
<dbReference type="InterPro" id="IPR016174">
    <property type="entry name" value="Di-haem_cyt_TM"/>
</dbReference>
<dbReference type="PANTHER" id="PTHR19271">
    <property type="entry name" value="CYTOCHROME B"/>
    <property type="match status" value="1"/>
</dbReference>
<dbReference type="PANTHER" id="PTHR19271:SF16">
    <property type="entry name" value="CYTOCHROME B"/>
    <property type="match status" value="1"/>
</dbReference>
<dbReference type="Pfam" id="PF00032">
    <property type="entry name" value="Cytochrom_B_C"/>
    <property type="match status" value="1"/>
</dbReference>
<dbReference type="Pfam" id="PF00033">
    <property type="entry name" value="Cytochrome_B"/>
    <property type="match status" value="1"/>
</dbReference>
<dbReference type="PIRSF" id="PIRSF038885">
    <property type="entry name" value="COB"/>
    <property type="match status" value="1"/>
</dbReference>
<dbReference type="SUPFAM" id="SSF81648">
    <property type="entry name" value="a domain/subunit of cytochrome bc1 complex (Ubiquinol-cytochrome c reductase)"/>
    <property type="match status" value="1"/>
</dbReference>
<dbReference type="SUPFAM" id="SSF81342">
    <property type="entry name" value="Transmembrane di-heme cytochromes"/>
    <property type="match status" value="1"/>
</dbReference>
<dbReference type="PROSITE" id="PS51003">
    <property type="entry name" value="CYTB_CTER"/>
    <property type="match status" value="1"/>
</dbReference>
<dbReference type="PROSITE" id="PS51002">
    <property type="entry name" value="CYTB_NTER"/>
    <property type="match status" value="1"/>
</dbReference>
<evidence type="ECO:0000250" key="1"/>
<evidence type="ECO:0000250" key="2">
    <source>
        <dbReference type="UniProtKB" id="P00157"/>
    </source>
</evidence>
<evidence type="ECO:0000255" key="3">
    <source>
        <dbReference type="PROSITE-ProRule" id="PRU00967"/>
    </source>
</evidence>
<evidence type="ECO:0000255" key="4">
    <source>
        <dbReference type="PROSITE-ProRule" id="PRU00968"/>
    </source>
</evidence>